<sequence>MNIHEYQGKEILRKYNVPVPRGIPAFSVEEALKAAETLGGPVWVVKAQIHAGGRGKGGGVKVAKSMDEVKTYASNILGMTLVTHQTGPEGKKVNRLLIEEGADIKKELYVSLVVDRVSQKVALMASSEGGMDIEEVAAHTPEKIHTLIVDPQIGLQDAEADDIARKIGVPDASVPQARQALQGLYKAFWETDASLAEINPLILTGDGKVIALDAKFNFDSNALFRHPEIVAYRDLDEEDANEIEASKFDLAYISLDGNIGCLVNGAGLAMATMDTIKLFGGEPANFLDVGGGATTEKVTEAFKLMLKNPGLKAILVNIFGGIMRCDVIAEGVIAASKAVSLSVPLVVRMKGTNEDLGKKMLADSGLPIIAADTMEEAAQKVVAAAAGK</sequence>
<proteinExistence type="inferred from homology"/>
<gene>
    <name evidence="1" type="primary">sucC</name>
    <name type="ordered locus">RSc0554</name>
    <name type="ORF">RS04911</name>
</gene>
<protein>
    <recommendedName>
        <fullName evidence="1">Succinate--CoA ligase [ADP-forming] subunit beta</fullName>
        <ecNumber evidence="1">6.2.1.5</ecNumber>
    </recommendedName>
    <alternativeName>
        <fullName evidence="1">Succinyl-CoA synthetase subunit beta</fullName>
        <shortName evidence="1">SCS-beta</shortName>
    </alternativeName>
</protein>
<keyword id="KW-0067">ATP-binding</keyword>
<keyword id="KW-0436">Ligase</keyword>
<keyword id="KW-0460">Magnesium</keyword>
<keyword id="KW-0479">Metal-binding</keyword>
<keyword id="KW-0547">Nucleotide-binding</keyword>
<keyword id="KW-1185">Reference proteome</keyword>
<keyword id="KW-0816">Tricarboxylic acid cycle</keyword>
<accession>Q8Y1Y3</accession>
<comment type="function">
    <text evidence="1">Succinyl-CoA synthetase functions in the citric acid cycle (TCA), coupling the hydrolysis of succinyl-CoA to the synthesis of either ATP or GTP and thus represents the only step of substrate-level phosphorylation in the TCA. The beta subunit provides nucleotide specificity of the enzyme and binds the substrate succinate, while the binding sites for coenzyme A and phosphate are found in the alpha subunit.</text>
</comment>
<comment type="catalytic activity">
    <reaction evidence="1">
        <text>succinate + ATP + CoA = succinyl-CoA + ADP + phosphate</text>
        <dbReference type="Rhea" id="RHEA:17661"/>
        <dbReference type="ChEBI" id="CHEBI:30031"/>
        <dbReference type="ChEBI" id="CHEBI:30616"/>
        <dbReference type="ChEBI" id="CHEBI:43474"/>
        <dbReference type="ChEBI" id="CHEBI:57287"/>
        <dbReference type="ChEBI" id="CHEBI:57292"/>
        <dbReference type="ChEBI" id="CHEBI:456216"/>
        <dbReference type="EC" id="6.2.1.5"/>
    </reaction>
    <physiologicalReaction direction="right-to-left" evidence="1">
        <dbReference type="Rhea" id="RHEA:17663"/>
    </physiologicalReaction>
</comment>
<comment type="catalytic activity">
    <reaction evidence="1">
        <text>GTP + succinate + CoA = succinyl-CoA + GDP + phosphate</text>
        <dbReference type="Rhea" id="RHEA:22120"/>
        <dbReference type="ChEBI" id="CHEBI:30031"/>
        <dbReference type="ChEBI" id="CHEBI:37565"/>
        <dbReference type="ChEBI" id="CHEBI:43474"/>
        <dbReference type="ChEBI" id="CHEBI:57287"/>
        <dbReference type="ChEBI" id="CHEBI:57292"/>
        <dbReference type="ChEBI" id="CHEBI:58189"/>
    </reaction>
    <physiologicalReaction direction="right-to-left" evidence="1">
        <dbReference type="Rhea" id="RHEA:22122"/>
    </physiologicalReaction>
</comment>
<comment type="cofactor">
    <cofactor evidence="1">
        <name>Mg(2+)</name>
        <dbReference type="ChEBI" id="CHEBI:18420"/>
    </cofactor>
    <text evidence="1">Binds 1 Mg(2+) ion per subunit.</text>
</comment>
<comment type="pathway">
    <text evidence="1">Carbohydrate metabolism; tricarboxylic acid cycle; succinate from succinyl-CoA (ligase route): step 1/1.</text>
</comment>
<comment type="subunit">
    <text evidence="1">Heterotetramer of two alpha and two beta subunits.</text>
</comment>
<comment type="similarity">
    <text evidence="1">Belongs to the succinate/malate CoA ligase beta subunit family.</text>
</comment>
<evidence type="ECO:0000255" key="1">
    <source>
        <dbReference type="HAMAP-Rule" id="MF_00558"/>
    </source>
</evidence>
<name>SUCC_RALN1</name>
<reference key="1">
    <citation type="journal article" date="2002" name="Nature">
        <title>Genome sequence of the plant pathogen Ralstonia solanacearum.</title>
        <authorList>
            <person name="Salanoubat M."/>
            <person name="Genin S."/>
            <person name="Artiguenave F."/>
            <person name="Gouzy J."/>
            <person name="Mangenot S."/>
            <person name="Arlat M."/>
            <person name="Billault A."/>
            <person name="Brottier P."/>
            <person name="Camus J.-C."/>
            <person name="Cattolico L."/>
            <person name="Chandler M."/>
            <person name="Choisne N."/>
            <person name="Claudel-Renard C."/>
            <person name="Cunnac S."/>
            <person name="Demange N."/>
            <person name="Gaspin C."/>
            <person name="Lavie M."/>
            <person name="Moisan A."/>
            <person name="Robert C."/>
            <person name="Saurin W."/>
            <person name="Schiex T."/>
            <person name="Siguier P."/>
            <person name="Thebault P."/>
            <person name="Whalen M."/>
            <person name="Wincker P."/>
            <person name="Levy M."/>
            <person name="Weissenbach J."/>
            <person name="Boucher C.A."/>
        </authorList>
    </citation>
    <scope>NUCLEOTIDE SEQUENCE [LARGE SCALE GENOMIC DNA]</scope>
    <source>
        <strain>ATCC BAA-1114 / GMI1000</strain>
    </source>
</reference>
<dbReference type="EC" id="6.2.1.5" evidence="1"/>
<dbReference type="EMBL" id="AL646052">
    <property type="protein sequence ID" value="CAD14082.1"/>
    <property type="molecule type" value="Genomic_DNA"/>
</dbReference>
<dbReference type="RefSeq" id="WP_011000513.1">
    <property type="nucleotide sequence ID" value="NC_003295.1"/>
</dbReference>
<dbReference type="SMR" id="Q8Y1Y3"/>
<dbReference type="STRING" id="267608.RSc0554"/>
<dbReference type="EnsemblBacteria" id="CAD14082">
    <property type="protein sequence ID" value="CAD14082"/>
    <property type="gene ID" value="RSc0554"/>
</dbReference>
<dbReference type="KEGG" id="rso:RSc0554"/>
<dbReference type="eggNOG" id="COG0045">
    <property type="taxonomic scope" value="Bacteria"/>
</dbReference>
<dbReference type="HOGENOM" id="CLU_037430_0_2_4"/>
<dbReference type="UniPathway" id="UPA00223">
    <property type="reaction ID" value="UER00999"/>
</dbReference>
<dbReference type="Proteomes" id="UP000001436">
    <property type="component" value="Chromosome"/>
</dbReference>
<dbReference type="GO" id="GO:0005829">
    <property type="term" value="C:cytosol"/>
    <property type="evidence" value="ECO:0007669"/>
    <property type="project" value="TreeGrafter"/>
</dbReference>
<dbReference type="GO" id="GO:0042709">
    <property type="term" value="C:succinate-CoA ligase complex"/>
    <property type="evidence" value="ECO:0007669"/>
    <property type="project" value="TreeGrafter"/>
</dbReference>
<dbReference type="GO" id="GO:0005524">
    <property type="term" value="F:ATP binding"/>
    <property type="evidence" value="ECO:0007669"/>
    <property type="project" value="UniProtKB-UniRule"/>
</dbReference>
<dbReference type="GO" id="GO:0000287">
    <property type="term" value="F:magnesium ion binding"/>
    <property type="evidence" value="ECO:0007669"/>
    <property type="project" value="UniProtKB-UniRule"/>
</dbReference>
<dbReference type="GO" id="GO:0004775">
    <property type="term" value="F:succinate-CoA ligase (ADP-forming) activity"/>
    <property type="evidence" value="ECO:0007669"/>
    <property type="project" value="UniProtKB-UniRule"/>
</dbReference>
<dbReference type="GO" id="GO:0004776">
    <property type="term" value="F:succinate-CoA ligase (GDP-forming) activity"/>
    <property type="evidence" value="ECO:0007669"/>
    <property type="project" value="RHEA"/>
</dbReference>
<dbReference type="GO" id="GO:0006104">
    <property type="term" value="P:succinyl-CoA metabolic process"/>
    <property type="evidence" value="ECO:0007669"/>
    <property type="project" value="TreeGrafter"/>
</dbReference>
<dbReference type="GO" id="GO:0006099">
    <property type="term" value="P:tricarboxylic acid cycle"/>
    <property type="evidence" value="ECO:0007669"/>
    <property type="project" value="UniProtKB-UniRule"/>
</dbReference>
<dbReference type="FunFam" id="3.30.1490.20:FF:000002">
    <property type="entry name" value="Succinate--CoA ligase [ADP-forming] subunit beta"/>
    <property type="match status" value="1"/>
</dbReference>
<dbReference type="FunFam" id="3.30.470.20:FF:000002">
    <property type="entry name" value="Succinate--CoA ligase [ADP-forming] subunit beta"/>
    <property type="match status" value="1"/>
</dbReference>
<dbReference type="FunFam" id="3.40.50.261:FF:000001">
    <property type="entry name" value="Succinate--CoA ligase [ADP-forming] subunit beta"/>
    <property type="match status" value="1"/>
</dbReference>
<dbReference type="Gene3D" id="3.30.1490.20">
    <property type="entry name" value="ATP-grasp fold, A domain"/>
    <property type="match status" value="1"/>
</dbReference>
<dbReference type="Gene3D" id="3.30.470.20">
    <property type="entry name" value="ATP-grasp fold, B domain"/>
    <property type="match status" value="1"/>
</dbReference>
<dbReference type="Gene3D" id="3.40.50.261">
    <property type="entry name" value="Succinyl-CoA synthetase domains"/>
    <property type="match status" value="1"/>
</dbReference>
<dbReference type="HAMAP" id="MF_00558">
    <property type="entry name" value="Succ_CoA_beta"/>
    <property type="match status" value="1"/>
</dbReference>
<dbReference type="InterPro" id="IPR011761">
    <property type="entry name" value="ATP-grasp"/>
</dbReference>
<dbReference type="InterPro" id="IPR013650">
    <property type="entry name" value="ATP-grasp_succ-CoA_synth-type"/>
</dbReference>
<dbReference type="InterPro" id="IPR013815">
    <property type="entry name" value="ATP_grasp_subdomain_1"/>
</dbReference>
<dbReference type="InterPro" id="IPR017866">
    <property type="entry name" value="Succ-CoA_synthase_bsu_CS"/>
</dbReference>
<dbReference type="InterPro" id="IPR005811">
    <property type="entry name" value="SUCC_ACL_C"/>
</dbReference>
<dbReference type="InterPro" id="IPR005809">
    <property type="entry name" value="Succ_CoA_ligase-like_bsu"/>
</dbReference>
<dbReference type="InterPro" id="IPR016102">
    <property type="entry name" value="Succinyl-CoA_synth-like"/>
</dbReference>
<dbReference type="NCBIfam" id="NF001913">
    <property type="entry name" value="PRK00696.1"/>
    <property type="match status" value="1"/>
</dbReference>
<dbReference type="NCBIfam" id="TIGR01016">
    <property type="entry name" value="sucCoAbeta"/>
    <property type="match status" value="1"/>
</dbReference>
<dbReference type="PANTHER" id="PTHR11815:SF10">
    <property type="entry name" value="SUCCINATE--COA LIGASE [GDP-FORMING] SUBUNIT BETA, MITOCHONDRIAL"/>
    <property type="match status" value="1"/>
</dbReference>
<dbReference type="PANTHER" id="PTHR11815">
    <property type="entry name" value="SUCCINYL-COA SYNTHETASE BETA CHAIN"/>
    <property type="match status" value="1"/>
</dbReference>
<dbReference type="Pfam" id="PF08442">
    <property type="entry name" value="ATP-grasp_2"/>
    <property type="match status" value="1"/>
</dbReference>
<dbReference type="Pfam" id="PF00549">
    <property type="entry name" value="Ligase_CoA"/>
    <property type="match status" value="1"/>
</dbReference>
<dbReference type="PIRSF" id="PIRSF001554">
    <property type="entry name" value="SucCS_beta"/>
    <property type="match status" value="1"/>
</dbReference>
<dbReference type="SUPFAM" id="SSF56059">
    <property type="entry name" value="Glutathione synthetase ATP-binding domain-like"/>
    <property type="match status" value="1"/>
</dbReference>
<dbReference type="SUPFAM" id="SSF52210">
    <property type="entry name" value="Succinyl-CoA synthetase domains"/>
    <property type="match status" value="1"/>
</dbReference>
<dbReference type="PROSITE" id="PS50975">
    <property type="entry name" value="ATP_GRASP"/>
    <property type="match status" value="1"/>
</dbReference>
<dbReference type="PROSITE" id="PS01217">
    <property type="entry name" value="SUCCINYL_COA_LIG_3"/>
    <property type="match status" value="1"/>
</dbReference>
<organism>
    <name type="scientific">Ralstonia nicotianae (strain ATCC BAA-1114 / GMI1000)</name>
    <name type="common">Ralstonia solanacearum</name>
    <dbReference type="NCBI Taxonomy" id="267608"/>
    <lineage>
        <taxon>Bacteria</taxon>
        <taxon>Pseudomonadati</taxon>
        <taxon>Pseudomonadota</taxon>
        <taxon>Betaproteobacteria</taxon>
        <taxon>Burkholderiales</taxon>
        <taxon>Burkholderiaceae</taxon>
        <taxon>Ralstonia</taxon>
        <taxon>Ralstonia solanacearum species complex</taxon>
    </lineage>
</organism>
<feature type="chain" id="PRO_0000102845" description="Succinate--CoA ligase [ADP-forming] subunit beta">
    <location>
        <begin position="1"/>
        <end position="388"/>
    </location>
</feature>
<feature type="domain" description="ATP-grasp" evidence="1">
    <location>
        <begin position="9"/>
        <end position="244"/>
    </location>
</feature>
<feature type="binding site" evidence="1">
    <location>
        <position position="46"/>
    </location>
    <ligand>
        <name>ATP</name>
        <dbReference type="ChEBI" id="CHEBI:30616"/>
    </ligand>
</feature>
<feature type="binding site" evidence="1">
    <location>
        <begin position="53"/>
        <end position="55"/>
    </location>
    <ligand>
        <name>ATP</name>
        <dbReference type="ChEBI" id="CHEBI:30616"/>
    </ligand>
</feature>
<feature type="binding site" evidence="1">
    <location>
        <position position="99"/>
    </location>
    <ligand>
        <name>ATP</name>
        <dbReference type="ChEBI" id="CHEBI:30616"/>
    </ligand>
</feature>
<feature type="binding site" evidence="1">
    <location>
        <position position="102"/>
    </location>
    <ligand>
        <name>ATP</name>
        <dbReference type="ChEBI" id="CHEBI:30616"/>
    </ligand>
</feature>
<feature type="binding site" evidence="1">
    <location>
        <position position="107"/>
    </location>
    <ligand>
        <name>ATP</name>
        <dbReference type="ChEBI" id="CHEBI:30616"/>
    </ligand>
</feature>
<feature type="binding site" evidence="1">
    <location>
        <position position="199"/>
    </location>
    <ligand>
        <name>Mg(2+)</name>
        <dbReference type="ChEBI" id="CHEBI:18420"/>
    </ligand>
</feature>
<feature type="binding site" evidence="1">
    <location>
        <position position="213"/>
    </location>
    <ligand>
        <name>Mg(2+)</name>
        <dbReference type="ChEBI" id="CHEBI:18420"/>
    </ligand>
</feature>
<feature type="binding site" evidence="1">
    <location>
        <position position="264"/>
    </location>
    <ligand>
        <name>substrate</name>
        <note>ligand shared with subunit alpha</note>
    </ligand>
</feature>
<feature type="binding site" evidence="1">
    <location>
        <begin position="321"/>
        <end position="323"/>
    </location>
    <ligand>
        <name>substrate</name>
        <note>ligand shared with subunit alpha</note>
    </ligand>
</feature>